<feature type="chain" id="PRO_0000134872" description="Alpha-N-acetylgalactosaminidase">
    <location>
        <begin position="1"/>
        <end position="12" status="greater than"/>
    </location>
</feature>
<feature type="non-terminal residue">
    <location>
        <position position="12"/>
    </location>
</feature>
<accession>P83127</accession>
<organism>
    <name type="scientific">Bos indicus</name>
    <name type="common">Zebu</name>
    <dbReference type="NCBI Taxonomy" id="9915"/>
    <lineage>
        <taxon>Eukaryota</taxon>
        <taxon>Metazoa</taxon>
        <taxon>Chordata</taxon>
        <taxon>Craniata</taxon>
        <taxon>Vertebrata</taxon>
        <taxon>Euteleostomi</taxon>
        <taxon>Mammalia</taxon>
        <taxon>Eutheria</taxon>
        <taxon>Laurasiatheria</taxon>
        <taxon>Artiodactyla</taxon>
        <taxon>Ruminantia</taxon>
        <taxon>Pecora</taxon>
        <taxon>Bovidae</taxon>
        <taxon>Bovinae</taxon>
        <taxon>Bos</taxon>
    </lineage>
</organism>
<sequence length="12" mass="1325">LENGLLRKPPMG</sequence>
<reference key="1">
    <citation type="journal article" date="2002" name="Reprod. Nutr. Dev.">
        <title>Characterization of pregnancy-associated glycoproteins extracted from zebu (Bos indicus) placentas removed at different gestational periods.</title>
        <authorList>
            <person name="Sousa N.M."/>
            <person name="Remy B."/>
            <person name="El Amiri B."/>
            <person name="De Figueiredo J.R."/>
            <person name="Banga-Mboko H."/>
            <person name="Dias Goncalves P.B."/>
            <person name="Beckers J.-F.M.P."/>
        </authorList>
    </citation>
    <scope>PROTEIN SEQUENCE</scope>
    <scope>TISSUE SPECIFICITY</scope>
    <scope>GLYCOSYLATION</scope>
    <source>
        <tissue>Fetal cotyledon</tissue>
    </source>
</reference>
<evidence type="ECO:0000250" key="1">
    <source>
        <dbReference type="UniProtKB" id="P17050"/>
    </source>
</evidence>
<evidence type="ECO:0000269" key="2">
    <source>
    </source>
</evidence>
<evidence type="ECO:0000305" key="3"/>
<gene>
    <name type="primary">NAGA</name>
</gene>
<protein>
    <recommendedName>
        <fullName>Alpha-N-acetylgalactosaminidase</fullName>
        <ecNumber>3.2.1.49</ecNumber>
    </recommendedName>
    <alternativeName>
        <fullName>Alpha-galactosidase B</fullName>
    </alternativeName>
</protein>
<keyword id="KW-0903">Direct protein sequencing</keyword>
<keyword id="KW-0325">Glycoprotein</keyword>
<keyword id="KW-0326">Glycosidase</keyword>
<keyword id="KW-0378">Hydrolase</keyword>
<keyword id="KW-0443">Lipid metabolism</keyword>
<keyword id="KW-0458">Lysosome</keyword>
<proteinExistence type="evidence at protein level"/>
<name>NAGAB_BOSIN</name>
<dbReference type="EC" id="3.2.1.49"/>
<dbReference type="GO" id="GO:0005764">
    <property type="term" value="C:lysosome"/>
    <property type="evidence" value="ECO:0007669"/>
    <property type="project" value="UniProtKB-SubCell"/>
</dbReference>
<dbReference type="GO" id="GO:0016020">
    <property type="term" value="C:membrane"/>
    <property type="evidence" value="ECO:0007669"/>
    <property type="project" value="GOC"/>
</dbReference>
<dbReference type="GO" id="GO:0008456">
    <property type="term" value="F:alpha-N-acetylgalactosaminidase activity"/>
    <property type="evidence" value="ECO:0000250"/>
    <property type="project" value="UniProtKB"/>
</dbReference>
<dbReference type="GO" id="GO:0016052">
    <property type="term" value="P:carbohydrate catabolic process"/>
    <property type="evidence" value="ECO:0000250"/>
    <property type="project" value="UniProtKB"/>
</dbReference>
<dbReference type="GO" id="GO:0019377">
    <property type="term" value="P:glycolipid catabolic process"/>
    <property type="evidence" value="ECO:0000250"/>
    <property type="project" value="UniProtKB"/>
</dbReference>
<comment type="function">
    <text evidence="1">Removes terminal alpha-N-acetylgalactosamine residues from glycolipids and glycopeptides. Required for the breakdown of glycolipids.</text>
</comment>
<comment type="catalytic activity">
    <reaction>
        <text>Cleavage of non-reducing alpha-(1-&gt;3)-N-acetylgalactosamine residues from human blood group A and AB mucin glycoproteins, Forssman hapten and blood group A lacto series glycolipids.</text>
        <dbReference type="EC" id="3.2.1.49"/>
    </reaction>
</comment>
<comment type="catalytic activity">
    <reaction evidence="1">
        <text>a neolactoside IV(3)-alpha-GalNAc,IV(2)-alpha-Fuc-nLc4Cer(d18:1(4E)) + H2O = a neolactoside IV(2)-alpha-Fuc-nLc4Cer(d18:1(4E)) + N-acetyl-alpha-D-galactosamine</text>
        <dbReference type="Rhea" id="RHEA:48212"/>
        <dbReference type="ChEBI" id="CHEBI:15377"/>
        <dbReference type="ChEBI" id="CHEBI:28471"/>
        <dbReference type="ChEBI" id="CHEBI:28691"/>
        <dbReference type="ChEBI" id="CHEBI:40356"/>
    </reaction>
    <physiologicalReaction direction="left-to-right" evidence="1">
        <dbReference type="Rhea" id="RHEA:48213"/>
    </physiologicalReaction>
</comment>
<comment type="catalytic activity">
    <reaction evidence="1">
        <text>a neolactoside IV(3)-alpha-GalNAc,IV(2)-alpha-Fuc-nLc4Cer(d18:0) + H2O = a neolactoside IV(2)-alpha-Fuc-nLc4Cer(d18:0) + N-acetyl-alpha-D-galactosamine</text>
        <dbReference type="Rhea" id="RHEA:49304"/>
        <dbReference type="ChEBI" id="CHEBI:15377"/>
        <dbReference type="ChEBI" id="CHEBI:40356"/>
        <dbReference type="ChEBI" id="CHEBI:91118"/>
        <dbReference type="ChEBI" id="CHEBI:91119"/>
    </reaction>
    <physiologicalReaction direction="left-to-right" evidence="1">
        <dbReference type="Rhea" id="RHEA:49305"/>
    </physiologicalReaction>
</comment>
<comment type="catalytic activity">
    <reaction evidence="1">
        <text>a globoside IV3GalNAc-Gb4Cer + H2O = N-acetyl-alpha-D-galactosamine + a globoside Gb4Cer</text>
        <dbReference type="Rhea" id="RHEA:48412"/>
        <dbReference type="ChEBI" id="CHEBI:15377"/>
        <dbReference type="ChEBI" id="CHEBI:40356"/>
        <dbReference type="ChEBI" id="CHEBI:88167"/>
        <dbReference type="ChEBI" id="CHEBI:90400"/>
    </reaction>
    <physiologicalReaction direction="left-to-right" evidence="1">
        <dbReference type="Rhea" id="RHEA:48413"/>
    </physiologicalReaction>
</comment>
<comment type="subunit">
    <text evidence="1">Homodimer.</text>
</comment>
<comment type="subcellular location">
    <subcellularLocation>
        <location evidence="1">Lysosome</location>
    </subcellularLocation>
</comment>
<comment type="tissue specificity">
    <text evidence="2">Placenta.</text>
</comment>
<comment type="PTM">
    <text evidence="2">Glycosylated.</text>
</comment>
<comment type="similarity">
    <text evidence="3">Belongs to the glycosyl hydrolase 27 family.</text>
</comment>